<feature type="chain" id="PRO_0000181487" description="Large ribosomal subunit protein bL25">
    <location>
        <begin position="1"/>
        <end position="92"/>
    </location>
</feature>
<proteinExistence type="inferred from homology"/>
<reference key="1">
    <citation type="journal article" date="2005" name="Arch. Microbiol.">
        <title>Heme uptake genes in human and fish isolates of Photobacterium damselae: existence of hutA pseudogenes.</title>
        <authorList>
            <person name="Juiz-Rio S."/>
            <person name="Osorio C.R."/>
            <person name="Lemos M.L."/>
        </authorList>
    </citation>
    <scope>NUCLEOTIDE SEQUENCE [GENOMIC DNA]</scope>
    <source>
        <strain>MP-7801</strain>
    </source>
</reference>
<dbReference type="EMBL" id="AJ830894">
    <property type="protein sequence ID" value="CAH33824.1"/>
    <property type="molecule type" value="Genomic_DNA"/>
</dbReference>
<dbReference type="RefSeq" id="WP_044175735.1">
    <property type="nucleotide sequence ID" value="NZ_SUMH01000120.1"/>
</dbReference>
<dbReference type="SMR" id="Q659V3"/>
<dbReference type="GO" id="GO:0022625">
    <property type="term" value="C:cytosolic large ribosomal subunit"/>
    <property type="evidence" value="ECO:0007669"/>
    <property type="project" value="TreeGrafter"/>
</dbReference>
<dbReference type="GO" id="GO:0008097">
    <property type="term" value="F:5S rRNA binding"/>
    <property type="evidence" value="ECO:0007669"/>
    <property type="project" value="InterPro"/>
</dbReference>
<dbReference type="GO" id="GO:0003735">
    <property type="term" value="F:structural constituent of ribosome"/>
    <property type="evidence" value="ECO:0007669"/>
    <property type="project" value="InterPro"/>
</dbReference>
<dbReference type="GO" id="GO:0006412">
    <property type="term" value="P:translation"/>
    <property type="evidence" value="ECO:0007669"/>
    <property type="project" value="UniProtKB-UniRule"/>
</dbReference>
<dbReference type="CDD" id="cd00495">
    <property type="entry name" value="Ribosomal_L25_TL5_CTC"/>
    <property type="match status" value="1"/>
</dbReference>
<dbReference type="FunFam" id="2.40.240.10:FF:000002">
    <property type="entry name" value="50S ribosomal protein L25"/>
    <property type="match status" value="1"/>
</dbReference>
<dbReference type="Gene3D" id="2.40.240.10">
    <property type="entry name" value="Ribosomal Protein L25, Chain P"/>
    <property type="match status" value="1"/>
</dbReference>
<dbReference type="HAMAP" id="MF_01336">
    <property type="entry name" value="Ribosomal_bL25"/>
    <property type="match status" value="1"/>
</dbReference>
<dbReference type="InterPro" id="IPR020056">
    <property type="entry name" value="Rbsml_bL25/Gln-tRNA_synth_N"/>
</dbReference>
<dbReference type="InterPro" id="IPR011035">
    <property type="entry name" value="Ribosomal_bL25/Gln-tRNA_synth"/>
</dbReference>
<dbReference type="InterPro" id="IPR020055">
    <property type="entry name" value="Ribosomal_bL25_short"/>
</dbReference>
<dbReference type="InterPro" id="IPR029751">
    <property type="entry name" value="Ribosomal_L25_dom"/>
</dbReference>
<dbReference type="InterPro" id="IPR020930">
    <property type="entry name" value="Ribosomal_uL5_bac-type"/>
</dbReference>
<dbReference type="NCBIfam" id="NF004612">
    <property type="entry name" value="PRK05943.1"/>
    <property type="match status" value="1"/>
</dbReference>
<dbReference type="PANTHER" id="PTHR33284">
    <property type="entry name" value="RIBOSOMAL PROTEIN L25/GLN-TRNA SYNTHETASE, ANTI-CODON-BINDING DOMAIN-CONTAINING PROTEIN"/>
    <property type="match status" value="1"/>
</dbReference>
<dbReference type="PANTHER" id="PTHR33284:SF1">
    <property type="entry name" value="RIBOSOMAL PROTEIN L25_GLN-TRNA SYNTHETASE, ANTI-CODON-BINDING DOMAIN-CONTAINING PROTEIN"/>
    <property type="match status" value="1"/>
</dbReference>
<dbReference type="Pfam" id="PF01386">
    <property type="entry name" value="Ribosomal_L25p"/>
    <property type="match status" value="1"/>
</dbReference>
<dbReference type="SUPFAM" id="SSF50715">
    <property type="entry name" value="Ribosomal protein L25-like"/>
    <property type="match status" value="1"/>
</dbReference>
<comment type="function">
    <text evidence="1">This is one of the proteins that binds to the 5S RNA in the ribosome where it forms part of the central protuberance.</text>
</comment>
<comment type="subunit">
    <text evidence="1">Part of the 50S ribosomal subunit; part of the 5S rRNA/L5/L18/L25 subcomplex. Contacts the 5S rRNA. Binds to the 5S rRNA independently of L5 and L18.</text>
</comment>
<comment type="similarity">
    <text evidence="1">Belongs to the bacterial ribosomal protein bL25 family.</text>
</comment>
<accession>Q659V3</accession>
<protein>
    <recommendedName>
        <fullName evidence="1">Large ribosomal subunit protein bL25</fullName>
    </recommendedName>
    <alternativeName>
        <fullName evidence="2">50S ribosomal protein L25</fullName>
    </alternativeName>
</protein>
<organism>
    <name type="scientific">Photobacterium damsela subsp. piscicida</name>
    <name type="common">Pasteurella piscicida</name>
    <dbReference type="NCBI Taxonomy" id="38294"/>
    <lineage>
        <taxon>Bacteria</taxon>
        <taxon>Pseudomonadati</taxon>
        <taxon>Pseudomonadota</taxon>
        <taxon>Gammaproteobacteria</taxon>
        <taxon>Vibrionales</taxon>
        <taxon>Vibrionaceae</taxon>
        <taxon>Photobacterium</taxon>
    </lineage>
</organism>
<evidence type="ECO:0000255" key="1">
    <source>
        <dbReference type="HAMAP-Rule" id="MF_01336"/>
    </source>
</evidence>
<evidence type="ECO:0000305" key="2"/>
<name>RL25_PHODP</name>
<keyword id="KW-0687">Ribonucleoprotein</keyword>
<keyword id="KW-0689">Ribosomal protein</keyword>
<keyword id="KW-0694">RNA-binding</keyword>
<keyword id="KW-0699">rRNA-binding</keyword>
<sequence length="92" mass="10526">MKFEAVVRTDLGKGASRRLRHANQFPAIVYGGEEVPVAIVLDHDSVINQMDKPAFYEVITLVIDGKEVQVKPQDIQRHPYKPKVNHMDFKRV</sequence>
<gene>
    <name evidence="1" type="primary">rplY</name>
</gene>